<proteinExistence type="inferred from homology"/>
<comment type="function">
    <text evidence="1">Plays an important role in the de novo pathway of purine nucleotide biosynthesis. Catalyzes the first committed step in the biosynthesis of AMP from IMP.</text>
</comment>
<comment type="catalytic activity">
    <reaction evidence="1">
        <text>IMP + L-aspartate + GTP = N(6)-(1,2-dicarboxyethyl)-AMP + GDP + phosphate + 2 H(+)</text>
        <dbReference type="Rhea" id="RHEA:15753"/>
        <dbReference type="ChEBI" id="CHEBI:15378"/>
        <dbReference type="ChEBI" id="CHEBI:29991"/>
        <dbReference type="ChEBI" id="CHEBI:37565"/>
        <dbReference type="ChEBI" id="CHEBI:43474"/>
        <dbReference type="ChEBI" id="CHEBI:57567"/>
        <dbReference type="ChEBI" id="CHEBI:58053"/>
        <dbReference type="ChEBI" id="CHEBI:58189"/>
        <dbReference type="EC" id="6.3.4.4"/>
    </reaction>
</comment>
<comment type="cofactor">
    <cofactor evidence="1">
        <name>Mg(2+)</name>
        <dbReference type="ChEBI" id="CHEBI:18420"/>
    </cofactor>
    <text evidence="1">Binds 1 Mg(2+) ion per subunit.</text>
</comment>
<comment type="pathway">
    <text evidence="1">Purine metabolism; AMP biosynthesis via de novo pathway; AMP from IMP: step 1/2.</text>
</comment>
<comment type="subunit">
    <text evidence="1">Homodimer.</text>
</comment>
<comment type="subcellular location">
    <subcellularLocation>
        <location evidence="1">Cytoplasm</location>
    </subcellularLocation>
</comment>
<comment type="similarity">
    <text evidence="1">Belongs to the adenylosuccinate synthetase family.</text>
</comment>
<accession>Q2K4X9</accession>
<evidence type="ECO:0000255" key="1">
    <source>
        <dbReference type="HAMAP-Rule" id="MF_00011"/>
    </source>
</evidence>
<gene>
    <name evidence="1" type="primary">purA</name>
    <name type="ordered locus">RHE_CH03344</name>
</gene>
<reference key="1">
    <citation type="journal article" date="2006" name="Proc. Natl. Acad. Sci. U.S.A.">
        <title>The partitioned Rhizobium etli genome: genetic and metabolic redundancy in seven interacting replicons.</title>
        <authorList>
            <person name="Gonzalez V."/>
            <person name="Santamaria R.I."/>
            <person name="Bustos P."/>
            <person name="Hernandez-Gonzalez I."/>
            <person name="Medrano-Soto A."/>
            <person name="Moreno-Hagelsieb G."/>
            <person name="Janga S.C."/>
            <person name="Ramirez M.A."/>
            <person name="Jimenez-Jacinto V."/>
            <person name="Collado-Vides J."/>
            <person name="Davila G."/>
        </authorList>
    </citation>
    <scope>NUCLEOTIDE SEQUENCE [LARGE SCALE GENOMIC DNA]</scope>
    <source>
        <strain>ATCC 51251 / DSM 11541 / JCM 21823 / NBRC 15573 / CFN 42</strain>
    </source>
</reference>
<feature type="chain" id="PRO_1000000902" description="Adenylosuccinate synthetase">
    <location>
        <begin position="1"/>
        <end position="432"/>
    </location>
</feature>
<feature type="active site" description="Proton acceptor" evidence="1">
    <location>
        <position position="13"/>
    </location>
</feature>
<feature type="active site" description="Proton donor" evidence="1">
    <location>
        <position position="41"/>
    </location>
</feature>
<feature type="binding site" evidence="1">
    <location>
        <begin position="12"/>
        <end position="18"/>
    </location>
    <ligand>
        <name>GTP</name>
        <dbReference type="ChEBI" id="CHEBI:37565"/>
    </ligand>
</feature>
<feature type="binding site" description="in other chain" evidence="1">
    <location>
        <begin position="13"/>
        <end position="16"/>
    </location>
    <ligand>
        <name>IMP</name>
        <dbReference type="ChEBI" id="CHEBI:58053"/>
        <note>ligand shared between dimeric partners</note>
    </ligand>
</feature>
<feature type="binding site" evidence="1">
    <location>
        <position position="13"/>
    </location>
    <ligand>
        <name>Mg(2+)</name>
        <dbReference type="ChEBI" id="CHEBI:18420"/>
    </ligand>
</feature>
<feature type="binding site" description="in other chain" evidence="1">
    <location>
        <begin position="38"/>
        <end position="41"/>
    </location>
    <ligand>
        <name>IMP</name>
        <dbReference type="ChEBI" id="CHEBI:58053"/>
        <note>ligand shared between dimeric partners</note>
    </ligand>
</feature>
<feature type="binding site" evidence="1">
    <location>
        <begin position="40"/>
        <end position="42"/>
    </location>
    <ligand>
        <name>GTP</name>
        <dbReference type="ChEBI" id="CHEBI:37565"/>
    </ligand>
</feature>
<feature type="binding site" evidence="1">
    <location>
        <position position="40"/>
    </location>
    <ligand>
        <name>Mg(2+)</name>
        <dbReference type="ChEBI" id="CHEBI:18420"/>
    </ligand>
</feature>
<feature type="binding site" description="in other chain" evidence="1">
    <location>
        <position position="132"/>
    </location>
    <ligand>
        <name>IMP</name>
        <dbReference type="ChEBI" id="CHEBI:58053"/>
        <note>ligand shared between dimeric partners</note>
    </ligand>
</feature>
<feature type="binding site" evidence="1">
    <location>
        <position position="146"/>
    </location>
    <ligand>
        <name>IMP</name>
        <dbReference type="ChEBI" id="CHEBI:58053"/>
        <note>ligand shared between dimeric partners</note>
    </ligand>
</feature>
<feature type="binding site" description="in other chain" evidence="1">
    <location>
        <position position="226"/>
    </location>
    <ligand>
        <name>IMP</name>
        <dbReference type="ChEBI" id="CHEBI:58053"/>
        <note>ligand shared between dimeric partners</note>
    </ligand>
</feature>
<feature type="binding site" description="in other chain" evidence="1">
    <location>
        <position position="241"/>
    </location>
    <ligand>
        <name>IMP</name>
        <dbReference type="ChEBI" id="CHEBI:58053"/>
        <note>ligand shared between dimeric partners</note>
    </ligand>
</feature>
<feature type="binding site" evidence="1">
    <location>
        <begin position="301"/>
        <end position="307"/>
    </location>
    <ligand>
        <name>substrate</name>
    </ligand>
</feature>
<feature type="binding site" description="in other chain" evidence="1">
    <location>
        <position position="305"/>
    </location>
    <ligand>
        <name>IMP</name>
        <dbReference type="ChEBI" id="CHEBI:58053"/>
        <note>ligand shared between dimeric partners</note>
    </ligand>
</feature>
<feature type="binding site" evidence="1">
    <location>
        <position position="307"/>
    </location>
    <ligand>
        <name>GTP</name>
        <dbReference type="ChEBI" id="CHEBI:37565"/>
    </ligand>
</feature>
<feature type="binding site" evidence="1">
    <location>
        <begin position="333"/>
        <end position="335"/>
    </location>
    <ligand>
        <name>GTP</name>
        <dbReference type="ChEBI" id="CHEBI:37565"/>
    </ligand>
</feature>
<feature type="binding site" evidence="1">
    <location>
        <begin position="415"/>
        <end position="417"/>
    </location>
    <ligand>
        <name>GTP</name>
        <dbReference type="ChEBI" id="CHEBI:37565"/>
    </ligand>
</feature>
<organism>
    <name type="scientific">Rhizobium etli (strain ATCC 51251 / DSM 11541 / JCM 21823 / NBRC 15573 / CFN 42)</name>
    <dbReference type="NCBI Taxonomy" id="347834"/>
    <lineage>
        <taxon>Bacteria</taxon>
        <taxon>Pseudomonadati</taxon>
        <taxon>Pseudomonadota</taxon>
        <taxon>Alphaproteobacteria</taxon>
        <taxon>Hyphomicrobiales</taxon>
        <taxon>Rhizobiaceae</taxon>
        <taxon>Rhizobium/Agrobacterium group</taxon>
        <taxon>Rhizobium</taxon>
    </lineage>
</organism>
<protein>
    <recommendedName>
        <fullName evidence="1">Adenylosuccinate synthetase</fullName>
        <shortName evidence="1">AMPSase</shortName>
        <shortName evidence="1">AdSS</shortName>
        <ecNumber evidence="1">6.3.4.4</ecNumber>
    </recommendedName>
    <alternativeName>
        <fullName evidence="1">IMP--aspartate ligase</fullName>
    </alternativeName>
</protein>
<name>PURA_RHIEC</name>
<dbReference type="EC" id="6.3.4.4" evidence="1"/>
<dbReference type="EMBL" id="CP000133">
    <property type="protein sequence ID" value="ABC92107.1"/>
    <property type="molecule type" value="Genomic_DNA"/>
</dbReference>
<dbReference type="RefSeq" id="WP_011426576.1">
    <property type="nucleotide sequence ID" value="NC_007761.1"/>
</dbReference>
<dbReference type="SMR" id="Q2K4X9"/>
<dbReference type="KEGG" id="ret:RHE_CH03344"/>
<dbReference type="eggNOG" id="COG0104">
    <property type="taxonomic scope" value="Bacteria"/>
</dbReference>
<dbReference type="HOGENOM" id="CLU_029848_0_0_5"/>
<dbReference type="OrthoDB" id="9807553at2"/>
<dbReference type="UniPathway" id="UPA00075">
    <property type="reaction ID" value="UER00335"/>
</dbReference>
<dbReference type="Proteomes" id="UP000001936">
    <property type="component" value="Chromosome"/>
</dbReference>
<dbReference type="GO" id="GO:0005737">
    <property type="term" value="C:cytoplasm"/>
    <property type="evidence" value="ECO:0007669"/>
    <property type="project" value="UniProtKB-SubCell"/>
</dbReference>
<dbReference type="GO" id="GO:0004019">
    <property type="term" value="F:adenylosuccinate synthase activity"/>
    <property type="evidence" value="ECO:0007669"/>
    <property type="project" value="UniProtKB-UniRule"/>
</dbReference>
<dbReference type="GO" id="GO:0005525">
    <property type="term" value="F:GTP binding"/>
    <property type="evidence" value="ECO:0007669"/>
    <property type="project" value="UniProtKB-UniRule"/>
</dbReference>
<dbReference type="GO" id="GO:0000287">
    <property type="term" value="F:magnesium ion binding"/>
    <property type="evidence" value="ECO:0007669"/>
    <property type="project" value="UniProtKB-UniRule"/>
</dbReference>
<dbReference type="GO" id="GO:0044208">
    <property type="term" value="P:'de novo' AMP biosynthetic process"/>
    <property type="evidence" value="ECO:0007669"/>
    <property type="project" value="UniProtKB-UniRule"/>
</dbReference>
<dbReference type="GO" id="GO:0046040">
    <property type="term" value="P:IMP metabolic process"/>
    <property type="evidence" value="ECO:0007669"/>
    <property type="project" value="TreeGrafter"/>
</dbReference>
<dbReference type="CDD" id="cd03108">
    <property type="entry name" value="AdSS"/>
    <property type="match status" value="1"/>
</dbReference>
<dbReference type="FunFam" id="1.10.300.10:FF:000001">
    <property type="entry name" value="Adenylosuccinate synthetase"/>
    <property type="match status" value="1"/>
</dbReference>
<dbReference type="FunFam" id="3.90.170.10:FF:000001">
    <property type="entry name" value="Adenylosuccinate synthetase"/>
    <property type="match status" value="1"/>
</dbReference>
<dbReference type="Gene3D" id="3.40.440.10">
    <property type="entry name" value="Adenylosuccinate Synthetase, subunit A, domain 1"/>
    <property type="match status" value="1"/>
</dbReference>
<dbReference type="Gene3D" id="1.10.300.10">
    <property type="entry name" value="Adenylosuccinate Synthetase, subunit A, domain 2"/>
    <property type="match status" value="1"/>
</dbReference>
<dbReference type="Gene3D" id="3.90.170.10">
    <property type="entry name" value="Adenylosuccinate Synthetase, subunit A, domain 3"/>
    <property type="match status" value="1"/>
</dbReference>
<dbReference type="HAMAP" id="MF_00011">
    <property type="entry name" value="Adenylosucc_synth"/>
    <property type="match status" value="1"/>
</dbReference>
<dbReference type="InterPro" id="IPR018220">
    <property type="entry name" value="Adenylosuccin_syn_GTP-bd"/>
</dbReference>
<dbReference type="InterPro" id="IPR033128">
    <property type="entry name" value="Adenylosuccin_syn_Lys_AS"/>
</dbReference>
<dbReference type="InterPro" id="IPR042109">
    <property type="entry name" value="Adenylosuccinate_synth_dom1"/>
</dbReference>
<dbReference type="InterPro" id="IPR042110">
    <property type="entry name" value="Adenylosuccinate_synth_dom2"/>
</dbReference>
<dbReference type="InterPro" id="IPR042111">
    <property type="entry name" value="Adenylosuccinate_synth_dom3"/>
</dbReference>
<dbReference type="InterPro" id="IPR001114">
    <property type="entry name" value="Adenylosuccinate_synthetase"/>
</dbReference>
<dbReference type="InterPro" id="IPR027417">
    <property type="entry name" value="P-loop_NTPase"/>
</dbReference>
<dbReference type="NCBIfam" id="NF002223">
    <property type="entry name" value="PRK01117.1"/>
    <property type="match status" value="1"/>
</dbReference>
<dbReference type="NCBIfam" id="TIGR00184">
    <property type="entry name" value="purA"/>
    <property type="match status" value="1"/>
</dbReference>
<dbReference type="PANTHER" id="PTHR11846">
    <property type="entry name" value="ADENYLOSUCCINATE SYNTHETASE"/>
    <property type="match status" value="1"/>
</dbReference>
<dbReference type="PANTHER" id="PTHR11846:SF0">
    <property type="entry name" value="ADENYLOSUCCINATE SYNTHETASE"/>
    <property type="match status" value="1"/>
</dbReference>
<dbReference type="Pfam" id="PF00709">
    <property type="entry name" value="Adenylsucc_synt"/>
    <property type="match status" value="1"/>
</dbReference>
<dbReference type="SMART" id="SM00788">
    <property type="entry name" value="Adenylsucc_synt"/>
    <property type="match status" value="1"/>
</dbReference>
<dbReference type="SUPFAM" id="SSF52540">
    <property type="entry name" value="P-loop containing nucleoside triphosphate hydrolases"/>
    <property type="match status" value="1"/>
</dbReference>
<dbReference type="PROSITE" id="PS01266">
    <property type="entry name" value="ADENYLOSUCCIN_SYN_1"/>
    <property type="match status" value="1"/>
</dbReference>
<dbReference type="PROSITE" id="PS00513">
    <property type="entry name" value="ADENYLOSUCCIN_SYN_2"/>
    <property type="match status" value="1"/>
</dbReference>
<keyword id="KW-0963">Cytoplasm</keyword>
<keyword id="KW-0342">GTP-binding</keyword>
<keyword id="KW-0436">Ligase</keyword>
<keyword id="KW-0460">Magnesium</keyword>
<keyword id="KW-0479">Metal-binding</keyword>
<keyword id="KW-0547">Nucleotide-binding</keyword>
<keyword id="KW-0658">Purine biosynthesis</keyword>
<keyword id="KW-1185">Reference proteome</keyword>
<sequence length="432" mass="46494">MTNVVVVGSQWGDEGKGKIVDWLSERADIVVRFQGGHNAGHTLVIDGTSYKLSLLPSGVVRPGKMAVIGNGVVVDPHALIAEIEKLSAQGVTITPDNLRIADNATLILSLHRELDAMREDAASNSGTKIGTTRRGIGPAYEDKVGRRAIRVMDLADLDSLPGKVDRILTHHNALRRGLGVAEVSHQTIMDELTSVAERVLPFRDTVWLFLDKERRKGARILFEGAQGSLLDIDHGTYPFVTSSNTVAGQAAAGSGMGPGSLGYILGITKAYTTRVGEGPFPTELTDEIGQFLGEKGHEFGTVTGRKRRCGWFDAALVRQSVATNGITGIALTKLDVLDGLEELKICVGYMLDGEQIDHLPASQGAQARVEPIYVTLEGWKESTVGARSWADLPAQAIKYVRQVEELIGAPVALLSTSPERDDTILVTDPFED</sequence>